<keyword id="KW-0067">ATP-binding</keyword>
<keyword id="KW-0418">Kinase</keyword>
<keyword id="KW-0547">Nucleotide-binding</keyword>
<keyword id="KW-1185">Reference proteome</keyword>
<keyword id="KW-0723">Serine/threonine-protein kinase</keyword>
<keyword id="KW-0808">Transferase</keyword>
<keyword id="KW-0946">Virion</keyword>
<evidence type="ECO:0000255" key="1">
    <source>
        <dbReference type="PROSITE-ProRule" id="PRU00159"/>
    </source>
</evidence>
<evidence type="ECO:0000269" key="2">
    <source>
    </source>
</evidence>
<reference key="1">
    <citation type="journal article" date="2004" name="Science">
        <title>The 1.2-megabase genome sequence of Mimivirus.</title>
        <authorList>
            <person name="Raoult D."/>
            <person name="Audic S."/>
            <person name="Robert C."/>
            <person name="Abergel C."/>
            <person name="Renesto P."/>
            <person name="Ogata H."/>
            <person name="La Scola B."/>
            <person name="Susan M."/>
            <person name="Claverie J.-M."/>
        </authorList>
    </citation>
    <scope>NUCLEOTIDE SEQUENCE [GENOMIC DNA]</scope>
    <source>
        <strain>Rowbotham-Bradford</strain>
    </source>
</reference>
<reference key="2">
    <citation type="journal article" date="2006" name="J. Virol.">
        <title>Mimivirus giant particles incorporate a large fraction of anonymous and unique gene products.</title>
        <authorList>
            <person name="Renesto P."/>
            <person name="Abergel C."/>
            <person name="Decloquement P."/>
            <person name="Moinier D."/>
            <person name="Azza S."/>
            <person name="Ogata H."/>
            <person name="Fourquet P."/>
            <person name="Gorvel J.-P."/>
            <person name="Claverie J.-M."/>
            <person name="Raoult D."/>
        </authorList>
    </citation>
    <scope>IDENTIFICATION BY MASS SPECTROMETRY [LARGE SCALE ANALYSIS]</scope>
    <scope>SUBCELLULAR LOCATION</scope>
</reference>
<name>YR301_MIMIV</name>
<organismHost>
    <name type="scientific">Acanthamoeba polyphaga</name>
    <name type="common">Amoeba</name>
    <dbReference type="NCBI Taxonomy" id="5757"/>
</organismHost>
<comment type="catalytic activity">
    <reaction>
        <text>L-seryl-[protein] + ATP = O-phospho-L-seryl-[protein] + ADP + H(+)</text>
        <dbReference type="Rhea" id="RHEA:17989"/>
        <dbReference type="Rhea" id="RHEA-COMP:9863"/>
        <dbReference type="Rhea" id="RHEA-COMP:11604"/>
        <dbReference type="ChEBI" id="CHEBI:15378"/>
        <dbReference type="ChEBI" id="CHEBI:29999"/>
        <dbReference type="ChEBI" id="CHEBI:30616"/>
        <dbReference type="ChEBI" id="CHEBI:83421"/>
        <dbReference type="ChEBI" id="CHEBI:456216"/>
        <dbReference type="EC" id="2.7.11.1"/>
    </reaction>
</comment>
<comment type="catalytic activity">
    <reaction>
        <text>L-threonyl-[protein] + ATP = O-phospho-L-threonyl-[protein] + ADP + H(+)</text>
        <dbReference type="Rhea" id="RHEA:46608"/>
        <dbReference type="Rhea" id="RHEA-COMP:11060"/>
        <dbReference type="Rhea" id="RHEA-COMP:11605"/>
        <dbReference type="ChEBI" id="CHEBI:15378"/>
        <dbReference type="ChEBI" id="CHEBI:30013"/>
        <dbReference type="ChEBI" id="CHEBI:30616"/>
        <dbReference type="ChEBI" id="CHEBI:61977"/>
        <dbReference type="ChEBI" id="CHEBI:456216"/>
        <dbReference type="EC" id="2.7.11.1"/>
    </reaction>
</comment>
<comment type="subcellular location">
    <subcellularLocation>
        <location evidence="2">Virion</location>
    </subcellularLocation>
</comment>
<comment type="similarity">
    <text evidence="1">Belongs to the protein kinase superfamily. Ser/Thr protein kinase family.</text>
</comment>
<organism>
    <name type="scientific">Acanthamoeba polyphaga mimivirus</name>
    <name type="common">APMV</name>
    <dbReference type="NCBI Taxonomy" id="212035"/>
    <lineage>
        <taxon>Viruses</taxon>
        <taxon>Varidnaviria</taxon>
        <taxon>Bamfordvirae</taxon>
        <taxon>Nucleocytoviricota</taxon>
        <taxon>Megaviricetes</taxon>
        <taxon>Imitervirales</taxon>
        <taxon>Mimiviridae</taxon>
        <taxon>Megamimivirinae</taxon>
        <taxon>Mimivirus</taxon>
        <taxon>Mimivirus bradfordmassiliense</taxon>
    </lineage>
</organism>
<feature type="chain" id="PRO_0000253438" description="Putative serine/threonine-protein kinase R301">
    <location>
        <begin position="1"/>
        <end position="397"/>
    </location>
</feature>
<feature type="domain" description="Protein kinase" evidence="1">
    <location>
        <begin position="25"/>
        <end position="397"/>
    </location>
</feature>
<feature type="active site" description="Proton acceptor" evidence="1">
    <location>
        <position position="218"/>
    </location>
</feature>
<feature type="binding site" evidence="1">
    <location>
        <begin position="31"/>
        <end position="39"/>
    </location>
    <ligand>
        <name>ATP</name>
        <dbReference type="ChEBI" id="CHEBI:30616"/>
    </ligand>
</feature>
<feature type="binding site" evidence="1">
    <location>
        <position position="53"/>
    </location>
    <ligand>
        <name>ATP</name>
        <dbReference type="ChEBI" id="CHEBI:30616"/>
    </ligand>
</feature>
<gene>
    <name type="ordered locus">MIMI_R301</name>
</gene>
<proteinExistence type="evidence at protein level"/>
<dbReference type="EC" id="2.7.11.1"/>
<dbReference type="EMBL" id="AY653733">
    <property type="protein sequence ID" value="AAV50573.1"/>
    <property type="molecule type" value="Genomic_DNA"/>
</dbReference>
<dbReference type="KEGG" id="vg:9924916"/>
<dbReference type="OrthoDB" id="9612at10239"/>
<dbReference type="Proteomes" id="UP000001134">
    <property type="component" value="Genome"/>
</dbReference>
<dbReference type="GO" id="GO:0044423">
    <property type="term" value="C:virion component"/>
    <property type="evidence" value="ECO:0007669"/>
    <property type="project" value="UniProtKB-KW"/>
</dbReference>
<dbReference type="GO" id="GO:0005524">
    <property type="term" value="F:ATP binding"/>
    <property type="evidence" value="ECO:0007669"/>
    <property type="project" value="UniProtKB-KW"/>
</dbReference>
<dbReference type="GO" id="GO:0106310">
    <property type="term" value="F:protein serine kinase activity"/>
    <property type="evidence" value="ECO:0007669"/>
    <property type="project" value="RHEA"/>
</dbReference>
<dbReference type="GO" id="GO:0004674">
    <property type="term" value="F:protein serine/threonine kinase activity"/>
    <property type="evidence" value="ECO:0007669"/>
    <property type="project" value="UniProtKB-KW"/>
</dbReference>
<dbReference type="Gene3D" id="1.10.510.10">
    <property type="entry name" value="Transferase(Phosphotransferase) domain 1"/>
    <property type="match status" value="1"/>
</dbReference>
<dbReference type="InterPro" id="IPR011009">
    <property type="entry name" value="Kinase-like_dom_sf"/>
</dbReference>
<dbReference type="InterPro" id="IPR000719">
    <property type="entry name" value="Prot_kinase_dom"/>
</dbReference>
<dbReference type="SUPFAM" id="SSF56112">
    <property type="entry name" value="Protein kinase-like (PK-like)"/>
    <property type="match status" value="1"/>
</dbReference>
<dbReference type="PROSITE" id="PS50011">
    <property type="entry name" value="PROTEIN_KINASE_DOM"/>
    <property type="match status" value="1"/>
</dbReference>
<accession>Q5UPZ2</accession>
<protein>
    <recommendedName>
        <fullName>Putative serine/threonine-protein kinase R301</fullName>
        <ecNumber>2.7.11.1</ecNumber>
    </recommendedName>
</protein>
<sequence>MNFNKFYNKFHDEPIDCENFPDIGQIKSTSVGSGGSDNIVLIVVQDNIKYAVKIIPTLFYPKYKEQPNDDQMEIKFYQFFTKRYILTDRTPHIVGIYKCKTCDNIRDFLLKIKPKKSCPTFEEKLLKKVQYTQFENQLCNLLLYGENKLMDSKFIMALLEYCDFDFSRYLRDLLQNVYQNNFGNNIGEFFYELTRILFQIIFTLAIIQDDYPGFQHSDLFIRNILISITDKYTDNEYVAYYYKQKIFYLPANGIYAKINDFGTSIIVNELESNTYIYDKQTNKIFHKNPFNHKNDIYNLLIDIYFAFDEYIIENKLDESKINPIINFMDKFIDIETINKIFEINYYQLKDTWYIDGISVLENTIKTPHDYIMSDVFEVFQDLPANAKIIRHFNSPRL</sequence>